<sequence length="102" mass="11884">MADFLKGLPVYNKSNFSRFHADSVCKASNRRPSVYLPTREYPSEQIIVTEKTNILLRYLHQQWDKKNAAKKRDQEQVEIEGENSAPPRKIARTDSQDMNEDT</sequence>
<organism>
    <name type="scientific">Gallus gallus</name>
    <name type="common">Chicken</name>
    <dbReference type="NCBI Taxonomy" id="9031"/>
    <lineage>
        <taxon>Eukaryota</taxon>
        <taxon>Metazoa</taxon>
        <taxon>Chordata</taxon>
        <taxon>Craniata</taxon>
        <taxon>Vertebrata</taxon>
        <taxon>Euteleostomi</taxon>
        <taxon>Archelosauria</taxon>
        <taxon>Archosauria</taxon>
        <taxon>Dinosauria</taxon>
        <taxon>Saurischia</taxon>
        <taxon>Theropoda</taxon>
        <taxon>Coelurosauria</taxon>
        <taxon>Aves</taxon>
        <taxon>Neognathae</taxon>
        <taxon>Galloanserae</taxon>
        <taxon>Galliformes</taxon>
        <taxon>Phasianidae</taxon>
        <taxon>Phasianinae</taxon>
        <taxon>Gallus</taxon>
    </lineage>
</organism>
<protein>
    <recommendedName>
        <fullName evidence="1">DET1- and DDB1-associated protein 1</fullName>
    </recommendedName>
</protein>
<name>DDA1_CHICK</name>
<keyword id="KW-1185">Reference proteome</keyword>
<keyword id="KW-0833">Ubl conjugation pathway</keyword>
<reference key="1">
    <citation type="journal article" date="2005" name="Genome Biol.">
        <title>Full-length cDNAs from chicken bursal lymphocytes to facilitate gene function analysis.</title>
        <authorList>
            <person name="Caldwell R.B."/>
            <person name="Kierzek A.M."/>
            <person name="Arakawa H."/>
            <person name="Bezzubov Y."/>
            <person name="Zaim J."/>
            <person name="Fiedler P."/>
            <person name="Kutter S."/>
            <person name="Blagodatski A."/>
            <person name="Kostovska D."/>
            <person name="Koter M."/>
            <person name="Plachy J."/>
            <person name="Carninci P."/>
            <person name="Hayashizaki Y."/>
            <person name="Buerstedde J.-M."/>
        </authorList>
    </citation>
    <scope>NUCLEOTIDE SEQUENCE [LARGE SCALE MRNA]</scope>
    <source>
        <strain>CB</strain>
        <tissue>Bursa of Fabricius</tissue>
    </source>
</reference>
<comment type="function">
    <text evidence="1">Functions as a component of numerous distinct DCX (DDB1-CUL4-X-box) E3 ubiquitin-protein ligase complexes which mediate the ubiquitination and subsequent proteasomal degradation of target proteins. In the DCX complexes, acts as a scaffolding subunit required to stabilize the complex.</text>
</comment>
<comment type="pathway">
    <text evidence="1">Protein modification; protein ubiquitination.</text>
</comment>
<comment type="subunit">
    <text evidence="1">Component of numerous DCX (DDB1-CUL4-X-box) E3 ubiquitin-protein ligase complexes which consist of a core of DDB1, cullin-4 (CUL4A or CUL4B), DDA1 and RBX1.</text>
</comment>
<comment type="similarity">
    <text evidence="4">Belongs to the DDA1 family.</text>
</comment>
<evidence type="ECO:0000250" key="1">
    <source>
        <dbReference type="UniProtKB" id="Q9BW61"/>
    </source>
</evidence>
<evidence type="ECO:0000256" key="2">
    <source>
        <dbReference type="SAM" id="MobiDB-lite"/>
    </source>
</evidence>
<evidence type="ECO:0000303" key="3">
    <source>
    </source>
</evidence>
<evidence type="ECO:0000305" key="4"/>
<feature type="chain" id="PRO_0000310273" description="DET1- and DDB1-associated protein 1">
    <location>
        <begin position="1"/>
        <end position="102"/>
    </location>
</feature>
<feature type="region of interest" description="Disordered" evidence="2">
    <location>
        <begin position="67"/>
        <end position="102"/>
    </location>
</feature>
<accession>Q5ZK14</accession>
<proteinExistence type="inferred from homology"/>
<dbReference type="EMBL" id="AJ720270">
    <property type="protein sequence ID" value="CAG31929.1"/>
    <property type="molecule type" value="mRNA"/>
</dbReference>
<dbReference type="RefSeq" id="NP_001026579.1">
    <property type="nucleotide sequence ID" value="NM_001031408.2"/>
</dbReference>
<dbReference type="SMR" id="Q5ZK14"/>
<dbReference type="FunCoup" id="Q5ZK14">
    <property type="interactions" value="1261"/>
</dbReference>
<dbReference type="STRING" id="9031.ENSGALP00000071905"/>
<dbReference type="PaxDb" id="9031-ENSGALP00000001589"/>
<dbReference type="GeneID" id="426942"/>
<dbReference type="KEGG" id="gga:426942"/>
<dbReference type="CTD" id="79016"/>
<dbReference type="VEuPathDB" id="HostDB:geneid_426942"/>
<dbReference type="eggNOG" id="KOG4816">
    <property type="taxonomic scope" value="Eukaryota"/>
</dbReference>
<dbReference type="HOGENOM" id="CLU_144562_1_0_1"/>
<dbReference type="InParanoid" id="Q5ZK14"/>
<dbReference type="OrthoDB" id="8598182at2759"/>
<dbReference type="PhylomeDB" id="Q5ZK14"/>
<dbReference type="TreeFam" id="TF323534"/>
<dbReference type="UniPathway" id="UPA00143"/>
<dbReference type="PRO" id="PR:Q5ZK14"/>
<dbReference type="Proteomes" id="UP000000539">
    <property type="component" value="Unassembled WGS sequence"/>
</dbReference>
<dbReference type="GO" id="GO:0080008">
    <property type="term" value="C:Cul4-RING E3 ubiquitin ligase complex"/>
    <property type="evidence" value="ECO:0000250"/>
    <property type="project" value="UniProtKB"/>
</dbReference>
<dbReference type="GO" id="GO:0032436">
    <property type="term" value="P:positive regulation of proteasomal ubiquitin-dependent protein catabolic process"/>
    <property type="evidence" value="ECO:0000318"/>
    <property type="project" value="GO_Central"/>
</dbReference>
<dbReference type="GO" id="GO:0000209">
    <property type="term" value="P:protein polyubiquitination"/>
    <property type="evidence" value="ECO:0000250"/>
    <property type="project" value="UniProtKB"/>
</dbReference>
<dbReference type="InterPro" id="IPR033575">
    <property type="entry name" value="DDA1-like"/>
</dbReference>
<dbReference type="InterPro" id="IPR018276">
    <property type="entry name" value="DDA1_dom"/>
</dbReference>
<dbReference type="PANTHER" id="PTHR31879">
    <property type="entry name" value="DET1- AND DDB1-ASSOCIATED PROTEIN 1"/>
    <property type="match status" value="1"/>
</dbReference>
<dbReference type="PANTHER" id="PTHR31879:SF2">
    <property type="entry name" value="DET1- AND DDB1-ASSOCIATED PROTEIN 1"/>
    <property type="match status" value="1"/>
</dbReference>
<dbReference type="Pfam" id="PF10172">
    <property type="entry name" value="DDA1"/>
    <property type="match status" value="1"/>
</dbReference>
<gene>
    <name evidence="1" type="primary">DDA1</name>
    <name evidence="3" type="ORF">RCJMB04_13o6</name>
</gene>